<sequence>MASTVEGGDTALLPEFPRGPLDAYRARASFSWKELALFTEGEGMLRFKKTIFSALENDPLFARSPGADLSLEKYRELNFLRCKRIFEYDFLSVEDMFKSPLKVPALIQCLGMYDSSLAAKYLLHSLVFGSAVYSSGSERHLTYIQKIFRMEIFGCFALTELSHGSNTKAIRTTAHYDPATEEFIIHSPDFEAAKFWVGNMGKTATHAVVFAKLCVPGDQCHGLHPFIVQIRDPKTLLPMPGVMVGDIGKKLGQNGLDNGFAMFHKVRVPRQSLLNRMGDVTPEGTYVSPFKDVRQRFGASLGSLSSGRVSIVSLAILNLKLAVAIALRFSATRRQFGPTEEEEIPVLEYPMQQWRLLPYLAAVYALDHFSKSLFLDLVELQRGLASGDRSARQAELGREIHALASASKPLASWTTQQGIQECREACGGHGYLAMNRLGVLRDDNDPNCTYEGDNNILLQQTSNYLLGLLAHQVHDGACFRSPLKSVDFLDAYPGILDQKFEVSSVADCLDSAVALAAYKWLVCYLLRETYQKLNQEKRSGSSDFEARNKCQVSHGRPLALAFVELTVVQRFHEHVHQPSVPPSLRAVLGRLSALYALWSLSRHAALLYRGGYFSGEQAGEVLESAVLALCSQLKDDAVALVDVIAPPDFVLDSPIGRADGELYKNLWGAVLQESKVLERASWWPEFSVNKPVIGSLKSKL</sequence>
<dbReference type="EC" id="1.3.3.6" evidence="2"/>
<dbReference type="EMBL" id="Y11411">
    <property type="protein sequence ID" value="CAA72214.1"/>
    <property type="molecule type" value="mRNA"/>
</dbReference>
<dbReference type="EMBL" id="BC017053">
    <property type="protein sequence ID" value="AAH17053.1"/>
    <property type="molecule type" value="mRNA"/>
</dbReference>
<dbReference type="CCDS" id="CCDS3401.1">
    <molecule id="O15254-1"/>
</dbReference>
<dbReference type="CCDS" id="CCDS47017.1">
    <molecule id="O15254-2"/>
</dbReference>
<dbReference type="RefSeq" id="NP_001095137.1">
    <molecule id="O15254-2"/>
    <property type="nucleotide sequence ID" value="NM_001101667.2"/>
</dbReference>
<dbReference type="RefSeq" id="NP_001362712.1">
    <molecule id="O15254-1"/>
    <property type="nucleotide sequence ID" value="NM_001375783.1"/>
</dbReference>
<dbReference type="RefSeq" id="NP_001362717.1">
    <molecule id="O15254-2"/>
    <property type="nucleotide sequence ID" value="NM_001375788.1"/>
</dbReference>
<dbReference type="RefSeq" id="NP_003492.2">
    <molecule id="O15254-1"/>
    <property type="nucleotide sequence ID" value="NM_003501.3"/>
</dbReference>
<dbReference type="RefSeq" id="XP_005248068.1">
    <property type="nucleotide sequence ID" value="XM_005248011.4"/>
</dbReference>
<dbReference type="RefSeq" id="XP_005248070.1">
    <property type="nucleotide sequence ID" value="XM_005248013.3"/>
</dbReference>
<dbReference type="RefSeq" id="XP_011511867.1">
    <molecule id="O15254-1"/>
    <property type="nucleotide sequence ID" value="XM_011513565.3"/>
</dbReference>
<dbReference type="RefSeq" id="XP_047272185.1">
    <molecule id="O15254-1"/>
    <property type="nucleotide sequence ID" value="XM_047416229.1"/>
</dbReference>
<dbReference type="RefSeq" id="XP_047272186.1">
    <molecule id="O15254-1"/>
    <property type="nucleotide sequence ID" value="XM_047416230.1"/>
</dbReference>
<dbReference type="RefSeq" id="XP_054206919.1">
    <molecule id="O15254-1"/>
    <property type="nucleotide sequence ID" value="XM_054350944.1"/>
</dbReference>
<dbReference type="RefSeq" id="XP_054206920.1">
    <molecule id="O15254-1"/>
    <property type="nucleotide sequence ID" value="XM_054350945.1"/>
</dbReference>
<dbReference type="RefSeq" id="XP_054206921.1">
    <molecule id="O15254-1"/>
    <property type="nucleotide sequence ID" value="XM_054350946.1"/>
</dbReference>
<dbReference type="RefSeq" id="XP_054206922.1">
    <molecule id="O15254-1"/>
    <property type="nucleotide sequence ID" value="XM_054350947.1"/>
</dbReference>
<dbReference type="RefSeq" id="XP_054206923.1">
    <molecule id="O15254-1"/>
    <property type="nucleotide sequence ID" value="XM_054350948.1"/>
</dbReference>
<dbReference type="SMR" id="O15254"/>
<dbReference type="BioGRID" id="113907">
    <property type="interactions" value="87"/>
</dbReference>
<dbReference type="FunCoup" id="O15254">
    <property type="interactions" value="1710"/>
</dbReference>
<dbReference type="IntAct" id="O15254">
    <property type="interactions" value="21"/>
</dbReference>
<dbReference type="MINT" id="O15254"/>
<dbReference type="STRING" id="9606.ENSP00000348775"/>
<dbReference type="ChEMBL" id="CHEMBL4105817"/>
<dbReference type="DrugCentral" id="O15254"/>
<dbReference type="GlyGen" id="O15254">
    <property type="glycosylation" value="1 site, 1 O-linked glycan (1 site)"/>
</dbReference>
<dbReference type="iPTMnet" id="O15254"/>
<dbReference type="PhosphoSitePlus" id="O15254"/>
<dbReference type="SwissPalm" id="O15254"/>
<dbReference type="BioMuta" id="ACOX3"/>
<dbReference type="jPOST" id="O15254"/>
<dbReference type="MassIVE" id="O15254"/>
<dbReference type="PaxDb" id="9606-ENSP00000348775"/>
<dbReference type="PeptideAtlas" id="O15254"/>
<dbReference type="ProteomicsDB" id="48541">
    <molecule id="O15254-1"/>
</dbReference>
<dbReference type="ProteomicsDB" id="48542">
    <molecule id="O15254-2"/>
</dbReference>
<dbReference type="Pumba" id="O15254"/>
<dbReference type="Antibodypedia" id="52278">
    <property type="antibodies" value="113 antibodies from 23 providers"/>
</dbReference>
<dbReference type="DNASU" id="8310"/>
<dbReference type="Ensembl" id="ENST00000356406.10">
    <molecule id="O15254-1"/>
    <property type="protein sequence ID" value="ENSP00000348775.4"/>
    <property type="gene ID" value="ENSG00000087008.16"/>
</dbReference>
<dbReference type="Ensembl" id="ENST00000413009.6">
    <molecule id="O15254-2"/>
    <property type="protein sequence ID" value="ENSP00000413994.2"/>
    <property type="gene ID" value="ENSG00000087008.16"/>
</dbReference>
<dbReference type="Ensembl" id="ENST00000503233.5">
    <molecule id="O15254-1"/>
    <property type="protein sequence ID" value="ENSP00000421625.1"/>
    <property type="gene ID" value="ENSG00000087008.16"/>
</dbReference>
<dbReference type="GeneID" id="8310"/>
<dbReference type="KEGG" id="hsa:8310"/>
<dbReference type="MANE-Select" id="ENST00000356406.10">
    <property type="protein sequence ID" value="ENSP00000348775.4"/>
    <property type="RefSeq nucleotide sequence ID" value="NM_003501.3"/>
    <property type="RefSeq protein sequence ID" value="NP_003492.2"/>
</dbReference>
<dbReference type="UCSC" id="uc003glc.5">
    <molecule id="O15254-1"/>
    <property type="organism name" value="human"/>
</dbReference>
<dbReference type="AGR" id="HGNC:121"/>
<dbReference type="CTD" id="8310"/>
<dbReference type="DisGeNET" id="8310"/>
<dbReference type="GeneCards" id="ACOX3"/>
<dbReference type="HGNC" id="HGNC:121">
    <property type="gene designation" value="ACOX3"/>
</dbReference>
<dbReference type="HPA" id="ENSG00000087008">
    <property type="expression patterns" value="Low tissue specificity"/>
</dbReference>
<dbReference type="MalaCards" id="ACOX3"/>
<dbReference type="MIM" id="603402">
    <property type="type" value="gene"/>
</dbReference>
<dbReference type="neXtProt" id="NX_O15254"/>
<dbReference type="OpenTargets" id="ENSG00000087008"/>
<dbReference type="PharmGKB" id="PA24445"/>
<dbReference type="VEuPathDB" id="HostDB:ENSG00000087008"/>
<dbReference type="eggNOG" id="KOG0135">
    <property type="taxonomic scope" value="Eukaryota"/>
</dbReference>
<dbReference type="GeneTree" id="ENSGT00940000159423"/>
<dbReference type="HOGENOM" id="CLU_014629_4_2_1"/>
<dbReference type="InParanoid" id="O15254"/>
<dbReference type="OMA" id="SINKRFA"/>
<dbReference type="OrthoDB" id="538336at2759"/>
<dbReference type="PAN-GO" id="O15254">
    <property type="GO annotations" value="6 GO annotations based on evolutionary models"/>
</dbReference>
<dbReference type="PhylomeDB" id="O15254"/>
<dbReference type="TreeFam" id="TF314226"/>
<dbReference type="PathwayCommons" id="O15254"/>
<dbReference type="Reactome" id="R-HSA-389887">
    <property type="pathway name" value="Beta-oxidation of pristanoyl-CoA"/>
</dbReference>
<dbReference type="Reactome" id="R-HSA-9033241">
    <property type="pathway name" value="Peroxisomal protein import"/>
</dbReference>
<dbReference type="SignaLink" id="O15254"/>
<dbReference type="UniPathway" id="UPA00661"/>
<dbReference type="BioGRID-ORCS" id="8310">
    <property type="hits" value="11 hits in 1154 CRISPR screens"/>
</dbReference>
<dbReference type="ChiTaRS" id="ACOX3">
    <property type="organism name" value="human"/>
</dbReference>
<dbReference type="GeneWiki" id="ACOX3"/>
<dbReference type="GenomeRNAi" id="8310"/>
<dbReference type="Pharos" id="O15254">
    <property type="development level" value="Tchem"/>
</dbReference>
<dbReference type="PRO" id="PR:O15254"/>
<dbReference type="Proteomes" id="UP000005640">
    <property type="component" value="Chromosome 4"/>
</dbReference>
<dbReference type="RNAct" id="O15254">
    <property type="molecule type" value="protein"/>
</dbReference>
<dbReference type="Bgee" id="ENSG00000087008">
    <property type="expression patterns" value="Expressed in lower esophagus mucosa and 150 other cell types or tissues"/>
</dbReference>
<dbReference type="ExpressionAtlas" id="O15254">
    <property type="expression patterns" value="baseline and differential"/>
</dbReference>
<dbReference type="GO" id="GO:0005829">
    <property type="term" value="C:cytosol"/>
    <property type="evidence" value="ECO:0000304"/>
    <property type="project" value="Reactome"/>
</dbReference>
<dbReference type="GO" id="GO:0016020">
    <property type="term" value="C:membrane"/>
    <property type="evidence" value="ECO:0007005"/>
    <property type="project" value="UniProtKB"/>
</dbReference>
<dbReference type="GO" id="GO:0005782">
    <property type="term" value="C:peroxisomal matrix"/>
    <property type="evidence" value="ECO:0000304"/>
    <property type="project" value="Reactome"/>
</dbReference>
<dbReference type="GO" id="GO:0005777">
    <property type="term" value="C:peroxisome"/>
    <property type="evidence" value="ECO:0000314"/>
    <property type="project" value="UniProtKB"/>
</dbReference>
<dbReference type="GO" id="GO:0071949">
    <property type="term" value="F:FAD binding"/>
    <property type="evidence" value="ECO:0007669"/>
    <property type="project" value="InterPro"/>
</dbReference>
<dbReference type="GO" id="GO:0005504">
    <property type="term" value="F:fatty acid binding"/>
    <property type="evidence" value="ECO:0000318"/>
    <property type="project" value="GO_Central"/>
</dbReference>
<dbReference type="GO" id="GO:0050660">
    <property type="term" value="F:flavin adenine dinucleotide binding"/>
    <property type="evidence" value="ECO:0000318"/>
    <property type="project" value="GO_Central"/>
</dbReference>
<dbReference type="GO" id="GO:0016402">
    <property type="term" value="F:pristanoyl-CoA oxidase activity"/>
    <property type="evidence" value="ECO:0000318"/>
    <property type="project" value="GO_Central"/>
</dbReference>
<dbReference type="GO" id="GO:0033540">
    <property type="term" value="P:fatty acid beta-oxidation using acyl-CoA oxidase"/>
    <property type="evidence" value="ECO:0000318"/>
    <property type="project" value="GO_Central"/>
</dbReference>
<dbReference type="CDD" id="cd01150">
    <property type="entry name" value="AXO"/>
    <property type="match status" value="1"/>
</dbReference>
<dbReference type="FunFam" id="1.20.140.10:FF:000007">
    <property type="entry name" value="Acyl-coenzyme A oxidase"/>
    <property type="match status" value="1"/>
</dbReference>
<dbReference type="FunFam" id="1.20.140.10:FF:000010">
    <property type="entry name" value="Acyl-coenzyme A oxidase"/>
    <property type="match status" value="1"/>
</dbReference>
<dbReference type="FunFam" id="2.40.110.10:FF:000005">
    <property type="entry name" value="Acyl-coenzyme A oxidase"/>
    <property type="match status" value="1"/>
</dbReference>
<dbReference type="Gene3D" id="2.40.110.10">
    <property type="entry name" value="Butyryl-CoA Dehydrogenase, subunit A, domain 2"/>
    <property type="match status" value="1"/>
</dbReference>
<dbReference type="Gene3D" id="1.20.140.10">
    <property type="entry name" value="Butyryl-CoA Dehydrogenase, subunit A, domain 3"/>
    <property type="match status" value="2"/>
</dbReference>
<dbReference type="InterPro" id="IPR034171">
    <property type="entry name" value="ACO"/>
</dbReference>
<dbReference type="InterPro" id="IPR055060">
    <property type="entry name" value="ACOX_C_alpha1"/>
</dbReference>
<dbReference type="InterPro" id="IPR006091">
    <property type="entry name" value="Acyl-CoA_Oxase/DH_mid-dom"/>
</dbReference>
<dbReference type="InterPro" id="IPR046373">
    <property type="entry name" value="Acyl-CoA_Oxase/DH_mid-dom_sf"/>
</dbReference>
<dbReference type="InterPro" id="IPR012258">
    <property type="entry name" value="Acyl-CoA_oxidase"/>
</dbReference>
<dbReference type="InterPro" id="IPR002655">
    <property type="entry name" value="Acyl-CoA_oxidase_C"/>
</dbReference>
<dbReference type="InterPro" id="IPR036250">
    <property type="entry name" value="AcylCo_DH-like_C"/>
</dbReference>
<dbReference type="InterPro" id="IPR009100">
    <property type="entry name" value="AcylCoA_DH/oxidase_NM_dom_sf"/>
</dbReference>
<dbReference type="PANTHER" id="PTHR10909">
    <property type="entry name" value="ELECTRON TRANSPORT OXIDOREDUCTASE"/>
    <property type="match status" value="1"/>
</dbReference>
<dbReference type="PANTHER" id="PTHR10909:SF390">
    <property type="entry name" value="PEROXISOMAL ACYL-COENZYME A OXIDASE 3"/>
    <property type="match status" value="1"/>
</dbReference>
<dbReference type="Pfam" id="PF01756">
    <property type="entry name" value="ACOX"/>
    <property type="match status" value="1"/>
</dbReference>
<dbReference type="Pfam" id="PF22924">
    <property type="entry name" value="ACOX_C_alpha1"/>
    <property type="match status" value="1"/>
</dbReference>
<dbReference type="Pfam" id="PF02770">
    <property type="entry name" value="Acyl-CoA_dh_M"/>
    <property type="match status" value="1"/>
</dbReference>
<dbReference type="PIRSF" id="PIRSF000168">
    <property type="entry name" value="Acyl-CoA_oxidase"/>
    <property type="match status" value="1"/>
</dbReference>
<dbReference type="SUPFAM" id="SSF47203">
    <property type="entry name" value="Acyl-CoA dehydrogenase C-terminal domain-like"/>
    <property type="match status" value="2"/>
</dbReference>
<dbReference type="SUPFAM" id="SSF56645">
    <property type="entry name" value="Acyl-CoA dehydrogenase NM domain-like"/>
    <property type="match status" value="1"/>
</dbReference>
<comment type="function">
    <text evidence="2">Oxidizes the CoA-esters of 2-methyl-branched fatty acids.</text>
</comment>
<comment type="catalytic activity">
    <reaction evidence="2">
        <text>a 2,3-saturated acyl-CoA + O2 = a (2E)-enoyl-CoA + H2O2</text>
        <dbReference type="Rhea" id="RHEA:38959"/>
        <dbReference type="ChEBI" id="CHEBI:15379"/>
        <dbReference type="ChEBI" id="CHEBI:16240"/>
        <dbReference type="ChEBI" id="CHEBI:58856"/>
        <dbReference type="ChEBI" id="CHEBI:65111"/>
        <dbReference type="EC" id="1.3.3.6"/>
    </reaction>
    <physiologicalReaction direction="left-to-right" evidence="2">
        <dbReference type="Rhea" id="RHEA:38960"/>
    </physiologicalReaction>
</comment>
<comment type="catalytic activity">
    <reaction evidence="2">
        <text>(2S)-pristanoyl-CoA + O2 = (2E)-pristenoyl-CoA + H2O2</text>
        <dbReference type="Rhea" id="RHEA:40459"/>
        <dbReference type="ChEBI" id="CHEBI:15379"/>
        <dbReference type="ChEBI" id="CHEBI:16240"/>
        <dbReference type="ChEBI" id="CHEBI:77099"/>
        <dbReference type="ChEBI" id="CHEBI:77293"/>
    </reaction>
    <physiologicalReaction direction="left-to-right" evidence="2">
        <dbReference type="Rhea" id="RHEA:40460"/>
    </physiologicalReaction>
</comment>
<comment type="catalytic activity">
    <reaction evidence="2">
        <text>tetracosanoyl-CoA + O2 = (2E)-tetracosenoyl-CoA + H2O2</text>
        <dbReference type="Rhea" id="RHEA:40319"/>
        <dbReference type="ChEBI" id="CHEBI:15379"/>
        <dbReference type="ChEBI" id="CHEBI:16240"/>
        <dbReference type="ChEBI" id="CHEBI:65052"/>
        <dbReference type="ChEBI" id="CHEBI:74693"/>
    </reaction>
    <physiologicalReaction direction="left-to-right" evidence="2">
        <dbReference type="Rhea" id="RHEA:40320"/>
    </physiologicalReaction>
</comment>
<comment type="catalytic activity">
    <reaction evidence="2">
        <text>hexadecanoyl-CoA + O2 = (2E)-hexadecenoyl-CoA + H2O2</text>
        <dbReference type="Rhea" id="RHEA:40167"/>
        <dbReference type="ChEBI" id="CHEBI:15379"/>
        <dbReference type="ChEBI" id="CHEBI:16240"/>
        <dbReference type="ChEBI" id="CHEBI:57379"/>
        <dbReference type="ChEBI" id="CHEBI:61526"/>
    </reaction>
    <physiologicalReaction direction="left-to-right" evidence="2">
        <dbReference type="Rhea" id="RHEA:40168"/>
    </physiologicalReaction>
</comment>
<comment type="catalytic activity">
    <reaction evidence="2">
        <text>hexadecanedioyl-CoA + O2 = (2E)-hexadecenedioyl-CoA + H2O2</text>
        <dbReference type="Rhea" id="RHEA:40275"/>
        <dbReference type="ChEBI" id="CHEBI:15379"/>
        <dbReference type="ChEBI" id="CHEBI:16240"/>
        <dbReference type="ChEBI" id="CHEBI:77075"/>
        <dbReference type="ChEBI" id="CHEBI:77085"/>
    </reaction>
    <physiologicalReaction direction="left-to-right" evidence="2">
        <dbReference type="Rhea" id="RHEA:40276"/>
    </physiologicalReaction>
</comment>
<comment type="cofactor">
    <cofactor evidence="1">
        <name>FAD</name>
        <dbReference type="ChEBI" id="CHEBI:57692"/>
    </cofactor>
</comment>
<comment type="pathway">
    <text>Lipid metabolism; peroxisomal fatty acid beta-oxidation.</text>
</comment>
<comment type="subcellular location">
    <subcellularLocation>
        <location evidence="4">Peroxisome</location>
    </subcellularLocation>
</comment>
<comment type="alternative products">
    <event type="alternative splicing"/>
    <isoform>
        <id>O15254-1</id>
        <name>1</name>
        <sequence type="displayed"/>
    </isoform>
    <isoform>
        <id>O15254-2</id>
        <name>2</name>
        <sequence type="described" ref="VSP_023355 VSP_023356"/>
    </isoform>
</comment>
<comment type="similarity">
    <text evidence="4">Belongs to the acyl-CoA oxidase family.</text>
</comment>
<organism>
    <name type="scientific">Homo sapiens</name>
    <name type="common">Human</name>
    <dbReference type="NCBI Taxonomy" id="9606"/>
    <lineage>
        <taxon>Eukaryota</taxon>
        <taxon>Metazoa</taxon>
        <taxon>Chordata</taxon>
        <taxon>Craniata</taxon>
        <taxon>Vertebrata</taxon>
        <taxon>Euteleostomi</taxon>
        <taxon>Mammalia</taxon>
        <taxon>Eutheria</taxon>
        <taxon>Euarchontoglires</taxon>
        <taxon>Primates</taxon>
        <taxon>Haplorrhini</taxon>
        <taxon>Catarrhini</taxon>
        <taxon>Hominidae</taxon>
        <taxon>Homo</taxon>
    </lineage>
</organism>
<evidence type="ECO:0000250" key="1">
    <source>
        <dbReference type="UniProtKB" id="P07872"/>
    </source>
</evidence>
<evidence type="ECO:0000250" key="2">
    <source>
        <dbReference type="UniProtKB" id="Q63448"/>
    </source>
</evidence>
<evidence type="ECO:0000303" key="3">
    <source>
    </source>
</evidence>
<evidence type="ECO:0000305" key="4"/>
<evidence type="ECO:0007744" key="5">
    <source>
    </source>
</evidence>
<evidence type="ECO:0007744" key="6">
    <source>
    </source>
</evidence>
<evidence type="ECO:0007744" key="7">
    <source>
    </source>
</evidence>
<keyword id="KW-0007">Acetylation</keyword>
<keyword id="KW-0025">Alternative splicing</keyword>
<keyword id="KW-0274">FAD</keyword>
<keyword id="KW-0276">Fatty acid metabolism</keyword>
<keyword id="KW-0285">Flavoprotein</keyword>
<keyword id="KW-0443">Lipid metabolism</keyword>
<keyword id="KW-0560">Oxidoreductase</keyword>
<keyword id="KW-0576">Peroxisome</keyword>
<keyword id="KW-0597">Phosphoprotein</keyword>
<keyword id="KW-1267">Proteomics identification</keyword>
<keyword id="KW-1185">Reference proteome</keyword>
<name>ACOX3_HUMAN</name>
<accession>O15254</accession>
<accession>Q96AJ8</accession>
<proteinExistence type="evidence at protein level"/>
<feature type="initiator methionine" description="Removed" evidence="6 7">
    <location>
        <position position="1"/>
    </location>
</feature>
<feature type="chain" id="PRO_0000204685" description="Peroxisomal acyl-coenzyme A oxidase 3">
    <location>
        <begin position="2"/>
        <end position="700"/>
    </location>
</feature>
<feature type="short sequence motif" description="Microbody targeting signal" evidence="2">
    <location>
        <begin position="698"/>
        <end position="700"/>
    </location>
</feature>
<feature type="modified residue" description="N-acetylalanine" evidence="6 7">
    <location>
        <position position="2"/>
    </location>
</feature>
<feature type="modified residue" description="Phosphothreonine" evidence="5">
    <location>
        <position position="281"/>
    </location>
</feature>
<feature type="splice variant" id="VSP_023355" description="In isoform 2." evidence="3">
    <original>GGYFSGEQAGEVLES</original>
    <variation>AERRCSCPGRRDRSS</variation>
    <location>
        <begin position="610"/>
        <end position="624"/>
    </location>
</feature>
<feature type="splice variant" id="VSP_023356" description="In isoform 2." evidence="3">
    <location>
        <begin position="625"/>
        <end position="700"/>
    </location>
</feature>
<feature type="sequence variant" id="VAR_030802" description="In dbSNP:rs12513296.">
    <original>E</original>
    <variation>A</variation>
    <location>
        <position position="34"/>
    </location>
</feature>
<feature type="sequence variant" id="VAR_030803" description="In dbSNP:rs13434465.">
    <original>D</original>
    <variation>N</variation>
    <location>
        <position position="497"/>
    </location>
</feature>
<feature type="sequence conflict" description="In Ref. 1; CAA72214." evidence="4" ref="1">
    <original>EL</original>
    <variation>DV</variation>
    <location>
        <begin position="34"/>
        <end position="35"/>
    </location>
</feature>
<feature type="sequence conflict" description="In Ref. 1; CAA72214." evidence="4" ref="1">
    <original>ML</original>
    <variation>NV</variation>
    <location>
        <begin position="44"/>
        <end position="45"/>
    </location>
</feature>
<feature type="sequence conflict" description="In Ref. 1; CAA72214." evidence="4" ref="1">
    <original>D</original>
    <variation>A</variation>
    <location>
        <position position="95"/>
    </location>
</feature>
<feature type="sequence conflict" description="In Ref. 1; CAA72214." evidence="4" ref="1">
    <original>A</original>
    <variation>G</variation>
    <location>
        <position position="365"/>
    </location>
</feature>
<feature type="sequence conflict" description="In Ref. 1; CAA72214." evidence="4" ref="1">
    <original>S</original>
    <variation>K</variation>
    <location>
        <position position="601"/>
    </location>
</feature>
<reference key="1">
    <citation type="journal article" date="1997" name="Biochem. J.">
        <title>Evidence for the existence of a pristanoyl-CoA oxidase gene in man.</title>
        <authorList>
            <person name="Vanhooren J.C.T."/>
            <person name="Marynen P."/>
            <person name="Mannaerts G.P."/>
            <person name="van Veldhoven P.P."/>
        </authorList>
    </citation>
    <scope>NUCLEOTIDE SEQUENCE [MRNA] (ISOFORM 1)</scope>
    <source>
        <tissue>Liver</tissue>
    </source>
</reference>
<reference key="2">
    <citation type="journal article" date="2004" name="Genome Res.">
        <title>The status, quality, and expansion of the NIH full-length cDNA project: the Mammalian Gene Collection (MGC).</title>
        <authorList>
            <consortium name="The MGC Project Team"/>
        </authorList>
    </citation>
    <scope>NUCLEOTIDE SEQUENCE [LARGE SCALE MRNA] (ISOFORM 2)</scope>
    <source>
        <tissue>Uterus</tissue>
    </source>
</reference>
<reference key="3">
    <citation type="journal article" date="2009" name="Mol. Cell. Proteomics">
        <title>Large-scale proteomics analysis of the human kinome.</title>
        <authorList>
            <person name="Oppermann F.S."/>
            <person name="Gnad F."/>
            <person name="Olsen J.V."/>
            <person name="Hornberger R."/>
            <person name="Greff Z."/>
            <person name="Keri G."/>
            <person name="Mann M."/>
            <person name="Daub H."/>
        </authorList>
    </citation>
    <scope>PHOSPHORYLATION [LARGE SCALE ANALYSIS] AT THR-281</scope>
    <scope>IDENTIFICATION BY MASS SPECTROMETRY [LARGE SCALE ANALYSIS]</scope>
</reference>
<reference key="4">
    <citation type="journal article" date="2012" name="Mol. Cell. Proteomics">
        <title>Comparative large-scale characterisation of plant vs. mammal proteins reveals similar and idiosyncratic N-alpha acetylation features.</title>
        <authorList>
            <person name="Bienvenut W.V."/>
            <person name="Sumpton D."/>
            <person name="Martinez A."/>
            <person name="Lilla S."/>
            <person name="Espagne C."/>
            <person name="Meinnel T."/>
            <person name="Giglione C."/>
        </authorList>
    </citation>
    <scope>ACETYLATION [LARGE SCALE ANALYSIS] AT ALA-2</scope>
    <scope>CLEAVAGE OF INITIATOR METHIONINE [LARGE SCALE ANALYSIS]</scope>
    <scope>IDENTIFICATION BY MASS SPECTROMETRY [LARGE SCALE ANALYSIS]</scope>
</reference>
<reference key="5">
    <citation type="journal article" date="2012" name="Proc. Natl. Acad. Sci. U.S.A.">
        <title>N-terminal acetylome analyses and functional insights of the N-terminal acetyltransferase NatB.</title>
        <authorList>
            <person name="Van Damme P."/>
            <person name="Lasa M."/>
            <person name="Polevoda B."/>
            <person name="Gazquez C."/>
            <person name="Elosegui-Artola A."/>
            <person name="Kim D.S."/>
            <person name="De Juan-Pardo E."/>
            <person name="Demeyer K."/>
            <person name="Hole K."/>
            <person name="Larrea E."/>
            <person name="Timmerman E."/>
            <person name="Prieto J."/>
            <person name="Arnesen T."/>
            <person name="Sherman F."/>
            <person name="Gevaert K."/>
            <person name="Aldabe R."/>
        </authorList>
    </citation>
    <scope>ACETYLATION [LARGE SCALE ANALYSIS] AT ALA-2</scope>
    <scope>CLEAVAGE OF INITIATOR METHIONINE [LARGE SCALE ANALYSIS]</scope>
    <scope>IDENTIFICATION BY MASS SPECTROMETRY [LARGE SCALE ANALYSIS]</scope>
</reference>
<reference key="6">
    <citation type="journal article" date="2015" name="Proteomics">
        <title>N-terminome analysis of the human mitochondrial proteome.</title>
        <authorList>
            <person name="Vaca Jacome A.S."/>
            <person name="Rabilloud T."/>
            <person name="Schaeffer-Reiss C."/>
            <person name="Rompais M."/>
            <person name="Ayoub D."/>
            <person name="Lane L."/>
            <person name="Bairoch A."/>
            <person name="Van Dorsselaer A."/>
            <person name="Carapito C."/>
        </authorList>
    </citation>
    <scope>IDENTIFICATION BY MASS SPECTROMETRY [LARGE SCALE ANALYSIS]</scope>
</reference>
<protein>
    <recommendedName>
        <fullName>Peroxisomal acyl-coenzyme A oxidase 3</fullName>
        <ecNumber evidence="2">1.3.3.6</ecNumber>
    </recommendedName>
    <alternativeName>
        <fullName>Branched-chain acyl-CoA oxidase</fullName>
        <shortName>BRCACox</shortName>
    </alternativeName>
    <alternativeName>
        <fullName evidence="2">Pristanoyl-CoA oxidase</fullName>
    </alternativeName>
</protein>
<gene>
    <name type="primary">ACOX3</name>
    <name type="synonym">BRCOX</name>
    <name type="synonym">PRCOX</name>
</gene>